<proteinExistence type="inferred from homology"/>
<name>DNLJ_ANAMM</name>
<gene>
    <name evidence="1" type="primary">ligA</name>
    <name type="ordered locus">AM152</name>
</gene>
<dbReference type="EC" id="6.5.1.2" evidence="1"/>
<dbReference type="EMBL" id="CP000030">
    <property type="protein sequence ID" value="AAV86291.1"/>
    <property type="molecule type" value="Genomic_DNA"/>
</dbReference>
<dbReference type="RefSeq" id="WP_011114141.1">
    <property type="nucleotide sequence ID" value="NC_004842.2"/>
</dbReference>
<dbReference type="SMR" id="Q5PBN8"/>
<dbReference type="KEGG" id="ama:AM152"/>
<dbReference type="HOGENOM" id="CLU_007764_2_1_5"/>
<dbReference type="GO" id="GO:0005829">
    <property type="term" value="C:cytosol"/>
    <property type="evidence" value="ECO:0007669"/>
    <property type="project" value="TreeGrafter"/>
</dbReference>
<dbReference type="GO" id="GO:0003911">
    <property type="term" value="F:DNA ligase (NAD+) activity"/>
    <property type="evidence" value="ECO:0007669"/>
    <property type="project" value="UniProtKB-UniRule"/>
</dbReference>
<dbReference type="GO" id="GO:0046872">
    <property type="term" value="F:metal ion binding"/>
    <property type="evidence" value="ECO:0007669"/>
    <property type="project" value="UniProtKB-KW"/>
</dbReference>
<dbReference type="GO" id="GO:0006281">
    <property type="term" value="P:DNA repair"/>
    <property type="evidence" value="ECO:0007669"/>
    <property type="project" value="UniProtKB-KW"/>
</dbReference>
<dbReference type="GO" id="GO:0006260">
    <property type="term" value="P:DNA replication"/>
    <property type="evidence" value="ECO:0007669"/>
    <property type="project" value="UniProtKB-KW"/>
</dbReference>
<dbReference type="CDD" id="cd17748">
    <property type="entry name" value="BRCT_DNA_ligase_like"/>
    <property type="match status" value="1"/>
</dbReference>
<dbReference type="CDD" id="cd00114">
    <property type="entry name" value="LIGANc"/>
    <property type="match status" value="1"/>
</dbReference>
<dbReference type="FunFam" id="2.40.50.140:FF:000012">
    <property type="entry name" value="DNA ligase"/>
    <property type="match status" value="1"/>
</dbReference>
<dbReference type="Gene3D" id="6.20.10.30">
    <property type="match status" value="1"/>
</dbReference>
<dbReference type="Gene3D" id="1.10.150.20">
    <property type="entry name" value="5' to 3' exonuclease, C-terminal subdomain"/>
    <property type="match status" value="2"/>
</dbReference>
<dbReference type="Gene3D" id="3.40.50.10190">
    <property type="entry name" value="BRCT domain"/>
    <property type="match status" value="1"/>
</dbReference>
<dbReference type="Gene3D" id="3.30.470.30">
    <property type="entry name" value="DNA ligase/mRNA capping enzyme"/>
    <property type="match status" value="1"/>
</dbReference>
<dbReference type="Gene3D" id="1.10.287.610">
    <property type="entry name" value="Helix hairpin bin"/>
    <property type="match status" value="1"/>
</dbReference>
<dbReference type="Gene3D" id="2.40.50.140">
    <property type="entry name" value="Nucleic acid-binding proteins"/>
    <property type="match status" value="1"/>
</dbReference>
<dbReference type="HAMAP" id="MF_01588">
    <property type="entry name" value="DNA_ligase_A"/>
    <property type="match status" value="1"/>
</dbReference>
<dbReference type="InterPro" id="IPR001357">
    <property type="entry name" value="BRCT_dom"/>
</dbReference>
<dbReference type="InterPro" id="IPR036420">
    <property type="entry name" value="BRCT_dom_sf"/>
</dbReference>
<dbReference type="InterPro" id="IPR041663">
    <property type="entry name" value="DisA/LigA_HHH"/>
</dbReference>
<dbReference type="InterPro" id="IPR001679">
    <property type="entry name" value="DNA_ligase"/>
</dbReference>
<dbReference type="InterPro" id="IPR018239">
    <property type="entry name" value="DNA_ligase_AS"/>
</dbReference>
<dbReference type="InterPro" id="IPR013839">
    <property type="entry name" value="DNAligase_adenylation"/>
</dbReference>
<dbReference type="InterPro" id="IPR013840">
    <property type="entry name" value="DNAligase_N"/>
</dbReference>
<dbReference type="InterPro" id="IPR012340">
    <property type="entry name" value="NA-bd_OB-fold"/>
</dbReference>
<dbReference type="InterPro" id="IPR004150">
    <property type="entry name" value="NAD_DNA_ligase_OB"/>
</dbReference>
<dbReference type="InterPro" id="IPR010994">
    <property type="entry name" value="RuvA_2-like"/>
</dbReference>
<dbReference type="InterPro" id="IPR004149">
    <property type="entry name" value="Znf_DNAligase_C4"/>
</dbReference>
<dbReference type="NCBIfam" id="TIGR00575">
    <property type="entry name" value="dnlj"/>
    <property type="match status" value="1"/>
</dbReference>
<dbReference type="NCBIfam" id="NF005932">
    <property type="entry name" value="PRK07956.1"/>
    <property type="match status" value="1"/>
</dbReference>
<dbReference type="PANTHER" id="PTHR23389">
    <property type="entry name" value="CHROMOSOME TRANSMISSION FIDELITY FACTOR 18"/>
    <property type="match status" value="1"/>
</dbReference>
<dbReference type="PANTHER" id="PTHR23389:SF9">
    <property type="entry name" value="DNA LIGASE"/>
    <property type="match status" value="1"/>
</dbReference>
<dbReference type="Pfam" id="PF00533">
    <property type="entry name" value="BRCT"/>
    <property type="match status" value="1"/>
</dbReference>
<dbReference type="Pfam" id="PF01653">
    <property type="entry name" value="DNA_ligase_aden"/>
    <property type="match status" value="1"/>
</dbReference>
<dbReference type="Pfam" id="PF03120">
    <property type="entry name" value="DNA_ligase_OB"/>
    <property type="match status" value="1"/>
</dbReference>
<dbReference type="Pfam" id="PF03119">
    <property type="entry name" value="DNA_ligase_ZBD"/>
    <property type="match status" value="1"/>
</dbReference>
<dbReference type="Pfam" id="PF12826">
    <property type="entry name" value="HHH_2"/>
    <property type="match status" value="1"/>
</dbReference>
<dbReference type="PIRSF" id="PIRSF001604">
    <property type="entry name" value="LigA"/>
    <property type="match status" value="1"/>
</dbReference>
<dbReference type="SMART" id="SM00292">
    <property type="entry name" value="BRCT"/>
    <property type="match status" value="1"/>
</dbReference>
<dbReference type="SMART" id="SM00532">
    <property type="entry name" value="LIGANc"/>
    <property type="match status" value="1"/>
</dbReference>
<dbReference type="SUPFAM" id="SSF52113">
    <property type="entry name" value="BRCT domain"/>
    <property type="match status" value="1"/>
</dbReference>
<dbReference type="SUPFAM" id="SSF56091">
    <property type="entry name" value="DNA ligase/mRNA capping enzyme, catalytic domain"/>
    <property type="match status" value="1"/>
</dbReference>
<dbReference type="SUPFAM" id="SSF50249">
    <property type="entry name" value="Nucleic acid-binding proteins"/>
    <property type="match status" value="1"/>
</dbReference>
<dbReference type="SUPFAM" id="SSF47781">
    <property type="entry name" value="RuvA domain 2-like"/>
    <property type="match status" value="1"/>
</dbReference>
<dbReference type="PROSITE" id="PS50172">
    <property type="entry name" value="BRCT"/>
    <property type="match status" value="1"/>
</dbReference>
<dbReference type="PROSITE" id="PS01055">
    <property type="entry name" value="DNA_LIGASE_N1"/>
    <property type="match status" value="1"/>
</dbReference>
<organism>
    <name type="scientific">Anaplasma marginale (strain St. Maries)</name>
    <dbReference type="NCBI Taxonomy" id="234826"/>
    <lineage>
        <taxon>Bacteria</taxon>
        <taxon>Pseudomonadati</taxon>
        <taxon>Pseudomonadota</taxon>
        <taxon>Alphaproteobacteria</taxon>
        <taxon>Rickettsiales</taxon>
        <taxon>Anaplasmataceae</taxon>
        <taxon>Anaplasma</taxon>
    </lineage>
</organism>
<sequence length="673" mass="74628">MLEQARRRLAGLNAKLRHHDVLYHGLDAPEVTDHQYDLLVQEKKRLLDEFPDISQYDDYADVVGTPKIDSRFPKVQHLEPMLSLENAFTVQDVEKFITRVRRFLELQPDDILELSCELKMDGMSFSALYHGGKLTRVATRGNGHFGEDITTNAMVLRGLPHQLDSAPEVLEVRGEIYMHHEDFEKLRGSCNFANPRNAAAGSIRQLNQKIVEERNLSYVAYSAVNSTFATQQEILKQLDEWGFHTNKQVLFTDKIEEAIAFYNSVYTTRSALGYDIDGVVYKVNSTNFQKLLGATGKSPRWAIAHKFPSTEARTKLLDITVQVGRTGVVTPIAELEPINIGGVMVSRASLHNLNEIERKDVRIGDLVIVKRAGEVIPQVVDVDKTLRSSGTQKFVFPSHCPSCGSKLHREPGEVALRCVAELSCKAQALERVKHFVSRDGLNIMGLGAKQIEFFCNHGLIGSIADIFSLEEKLHGINLDTEHGWGEKSVANLIAAIRNSATVRLSNFIFALGIRFIGVGAAKLVAEHYRSYKNWHQAMLALTETHDTVQIRGLGEKSISSLKAFFSVQGNLEVLESLSAKLNILDEASPAQRGSSAISGKTVVFTGTLESMSRTEAKLQAESLGAKVANSVSANTWLLVAGSNPGSKHEKALSLNVRVIDEQTWVKMVEDARS</sequence>
<keyword id="KW-0227">DNA damage</keyword>
<keyword id="KW-0234">DNA repair</keyword>
<keyword id="KW-0235">DNA replication</keyword>
<keyword id="KW-0436">Ligase</keyword>
<keyword id="KW-0460">Magnesium</keyword>
<keyword id="KW-0464">Manganese</keyword>
<keyword id="KW-0479">Metal-binding</keyword>
<keyword id="KW-0520">NAD</keyword>
<keyword id="KW-0862">Zinc</keyword>
<feature type="chain" id="PRO_0000313113" description="DNA ligase">
    <location>
        <begin position="1"/>
        <end position="673"/>
    </location>
</feature>
<feature type="domain" description="BRCT" evidence="1">
    <location>
        <begin position="592"/>
        <end position="673"/>
    </location>
</feature>
<feature type="active site" description="N6-AMP-lysine intermediate" evidence="1">
    <location>
        <position position="119"/>
    </location>
</feature>
<feature type="binding site" evidence="1">
    <location>
        <begin position="33"/>
        <end position="37"/>
    </location>
    <ligand>
        <name>NAD(+)</name>
        <dbReference type="ChEBI" id="CHEBI:57540"/>
    </ligand>
</feature>
<feature type="binding site" evidence="1">
    <location>
        <begin position="83"/>
        <end position="84"/>
    </location>
    <ligand>
        <name>NAD(+)</name>
        <dbReference type="ChEBI" id="CHEBI:57540"/>
    </ligand>
</feature>
<feature type="binding site" evidence="1">
    <location>
        <position position="117"/>
    </location>
    <ligand>
        <name>NAD(+)</name>
        <dbReference type="ChEBI" id="CHEBI:57540"/>
    </ligand>
</feature>
<feature type="binding site" evidence="1">
    <location>
        <position position="140"/>
    </location>
    <ligand>
        <name>NAD(+)</name>
        <dbReference type="ChEBI" id="CHEBI:57540"/>
    </ligand>
</feature>
<feature type="binding site" evidence="1">
    <location>
        <position position="175"/>
    </location>
    <ligand>
        <name>NAD(+)</name>
        <dbReference type="ChEBI" id="CHEBI:57540"/>
    </ligand>
</feature>
<feature type="binding site" evidence="1">
    <location>
        <position position="282"/>
    </location>
    <ligand>
        <name>NAD(+)</name>
        <dbReference type="ChEBI" id="CHEBI:57540"/>
    </ligand>
</feature>
<feature type="binding site" evidence="1">
    <location>
        <position position="306"/>
    </location>
    <ligand>
        <name>NAD(+)</name>
        <dbReference type="ChEBI" id="CHEBI:57540"/>
    </ligand>
</feature>
<feature type="binding site" evidence="1">
    <location>
        <position position="400"/>
    </location>
    <ligand>
        <name>Zn(2+)</name>
        <dbReference type="ChEBI" id="CHEBI:29105"/>
    </ligand>
</feature>
<feature type="binding site" evidence="1">
    <location>
        <position position="403"/>
    </location>
    <ligand>
        <name>Zn(2+)</name>
        <dbReference type="ChEBI" id="CHEBI:29105"/>
    </ligand>
</feature>
<feature type="binding site" evidence="1">
    <location>
        <position position="418"/>
    </location>
    <ligand>
        <name>Zn(2+)</name>
        <dbReference type="ChEBI" id="CHEBI:29105"/>
    </ligand>
</feature>
<feature type="binding site" evidence="1">
    <location>
        <position position="424"/>
    </location>
    <ligand>
        <name>Zn(2+)</name>
        <dbReference type="ChEBI" id="CHEBI:29105"/>
    </ligand>
</feature>
<accession>Q5PBN8</accession>
<reference key="1">
    <citation type="journal article" date="2005" name="Proc. Natl. Acad. Sci. U.S.A.">
        <title>Complete genome sequencing of Anaplasma marginale reveals that the surface is skewed to two superfamilies of outer membrane proteins.</title>
        <authorList>
            <person name="Brayton K.A."/>
            <person name="Kappmeyer L.S."/>
            <person name="Herndon D.R."/>
            <person name="Dark M.J."/>
            <person name="Tibbals D.L."/>
            <person name="Palmer G.H."/>
            <person name="McGuire T.C."/>
            <person name="Knowles D.P. Jr."/>
        </authorList>
    </citation>
    <scope>NUCLEOTIDE SEQUENCE [LARGE SCALE GENOMIC DNA]</scope>
    <source>
        <strain>St. Maries</strain>
    </source>
</reference>
<evidence type="ECO:0000255" key="1">
    <source>
        <dbReference type="HAMAP-Rule" id="MF_01588"/>
    </source>
</evidence>
<protein>
    <recommendedName>
        <fullName evidence="1">DNA ligase</fullName>
        <ecNumber evidence="1">6.5.1.2</ecNumber>
    </recommendedName>
    <alternativeName>
        <fullName evidence="1">Polydeoxyribonucleotide synthase [NAD(+)]</fullName>
    </alternativeName>
</protein>
<comment type="function">
    <text evidence="1">DNA ligase that catalyzes the formation of phosphodiester linkages between 5'-phosphoryl and 3'-hydroxyl groups in double-stranded DNA using NAD as a coenzyme and as the energy source for the reaction. It is essential for DNA replication and repair of damaged DNA.</text>
</comment>
<comment type="catalytic activity">
    <reaction evidence="1">
        <text>NAD(+) + (deoxyribonucleotide)n-3'-hydroxyl + 5'-phospho-(deoxyribonucleotide)m = (deoxyribonucleotide)n+m + AMP + beta-nicotinamide D-nucleotide.</text>
        <dbReference type="EC" id="6.5.1.2"/>
    </reaction>
</comment>
<comment type="cofactor">
    <cofactor evidence="1">
        <name>Mg(2+)</name>
        <dbReference type="ChEBI" id="CHEBI:18420"/>
    </cofactor>
    <cofactor evidence="1">
        <name>Mn(2+)</name>
        <dbReference type="ChEBI" id="CHEBI:29035"/>
    </cofactor>
</comment>
<comment type="similarity">
    <text evidence="1">Belongs to the NAD-dependent DNA ligase family. LigA subfamily.</text>
</comment>